<gene>
    <name evidence="1" type="primary">rpmF</name>
    <name type="ordered locus">Shewmr7_2470</name>
</gene>
<comment type="similarity">
    <text evidence="1">Belongs to the bacterial ribosomal protein bL32 family.</text>
</comment>
<organism>
    <name type="scientific">Shewanella sp. (strain MR-7)</name>
    <dbReference type="NCBI Taxonomy" id="60481"/>
    <lineage>
        <taxon>Bacteria</taxon>
        <taxon>Pseudomonadati</taxon>
        <taxon>Pseudomonadota</taxon>
        <taxon>Gammaproteobacteria</taxon>
        <taxon>Alteromonadales</taxon>
        <taxon>Shewanellaceae</taxon>
        <taxon>Shewanella</taxon>
    </lineage>
</organism>
<proteinExistence type="inferred from homology"/>
<feature type="chain" id="PRO_0000296564" description="Large ribosomal subunit protein bL32">
    <location>
        <begin position="1"/>
        <end position="56"/>
    </location>
</feature>
<feature type="region of interest" description="Disordered" evidence="2">
    <location>
        <begin position="1"/>
        <end position="36"/>
    </location>
</feature>
<feature type="compositionally biased region" description="Basic residues" evidence="2">
    <location>
        <begin position="7"/>
        <end position="16"/>
    </location>
</feature>
<feature type="compositionally biased region" description="Polar residues" evidence="2">
    <location>
        <begin position="21"/>
        <end position="31"/>
    </location>
</feature>
<sequence length="56" mass="6285">MAVQQNKKSRSKRGMRRSHDALSTAQLSVDATSGEVHMRHNVTADGFYRGKKVINK</sequence>
<dbReference type="EMBL" id="CP000444">
    <property type="protein sequence ID" value="ABI43455.1"/>
    <property type="molecule type" value="Genomic_DNA"/>
</dbReference>
<dbReference type="SMR" id="Q0HTV0"/>
<dbReference type="KEGG" id="shm:Shewmr7_2470"/>
<dbReference type="HOGENOM" id="CLU_129084_2_1_6"/>
<dbReference type="GO" id="GO:0015934">
    <property type="term" value="C:large ribosomal subunit"/>
    <property type="evidence" value="ECO:0007669"/>
    <property type="project" value="InterPro"/>
</dbReference>
<dbReference type="GO" id="GO:0003735">
    <property type="term" value="F:structural constituent of ribosome"/>
    <property type="evidence" value="ECO:0007669"/>
    <property type="project" value="InterPro"/>
</dbReference>
<dbReference type="GO" id="GO:0006412">
    <property type="term" value="P:translation"/>
    <property type="evidence" value="ECO:0007669"/>
    <property type="project" value="UniProtKB-UniRule"/>
</dbReference>
<dbReference type="HAMAP" id="MF_00340">
    <property type="entry name" value="Ribosomal_bL32"/>
    <property type="match status" value="1"/>
</dbReference>
<dbReference type="InterPro" id="IPR002677">
    <property type="entry name" value="Ribosomal_bL32"/>
</dbReference>
<dbReference type="InterPro" id="IPR044957">
    <property type="entry name" value="Ribosomal_bL32_bact"/>
</dbReference>
<dbReference type="InterPro" id="IPR011332">
    <property type="entry name" value="Ribosomal_zn-bd"/>
</dbReference>
<dbReference type="NCBIfam" id="TIGR01031">
    <property type="entry name" value="rpmF_bact"/>
    <property type="match status" value="1"/>
</dbReference>
<dbReference type="PANTHER" id="PTHR35534">
    <property type="entry name" value="50S RIBOSOMAL PROTEIN L32"/>
    <property type="match status" value="1"/>
</dbReference>
<dbReference type="PANTHER" id="PTHR35534:SF1">
    <property type="entry name" value="LARGE RIBOSOMAL SUBUNIT PROTEIN BL32"/>
    <property type="match status" value="1"/>
</dbReference>
<dbReference type="Pfam" id="PF01783">
    <property type="entry name" value="Ribosomal_L32p"/>
    <property type="match status" value="1"/>
</dbReference>
<dbReference type="SUPFAM" id="SSF57829">
    <property type="entry name" value="Zn-binding ribosomal proteins"/>
    <property type="match status" value="1"/>
</dbReference>
<name>RL32_SHESR</name>
<protein>
    <recommendedName>
        <fullName evidence="1">Large ribosomal subunit protein bL32</fullName>
    </recommendedName>
    <alternativeName>
        <fullName evidence="3">50S ribosomal protein L32</fullName>
    </alternativeName>
</protein>
<evidence type="ECO:0000255" key="1">
    <source>
        <dbReference type="HAMAP-Rule" id="MF_00340"/>
    </source>
</evidence>
<evidence type="ECO:0000256" key="2">
    <source>
        <dbReference type="SAM" id="MobiDB-lite"/>
    </source>
</evidence>
<evidence type="ECO:0000305" key="3"/>
<reference key="1">
    <citation type="submission" date="2006-08" db="EMBL/GenBank/DDBJ databases">
        <title>Complete sequence of chromosome 1 of Shewanella sp. MR-7.</title>
        <authorList>
            <person name="Copeland A."/>
            <person name="Lucas S."/>
            <person name="Lapidus A."/>
            <person name="Barry K."/>
            <person name="Detter J.C."/>
            <person name="Glavina del Rio T."/>
            <person name="Hammon N."/>
            <person name="Israni S."/>
            <person name="Dalin E."/>
            <person name="Tice H."/>
            <person name="Pitluck S."/>
            <person name="Kiss H."/>
            <person name="Brettin T."/>
            <person name="Bruce D."/>
            <person name="Han C."/>
            <person name="Tapia R."/>
            <person name="Gilna P."/>
            <person name="Schmutz J."/>
            <person name="Larimer F."/>
            <person name="Land M."/>
            <person name="Hauser L."/>
            <person name="Kyrpides N."/>
            <person name="Mikhailova N."/>
            <person name="Nealson K."/>
            <person name="Konstantinidis K."/>
            <person name="Klappenbach J."/>
            <person name="Tiedje J."/>
            <person name="Richardson P."/>
        </authorList>
    </citation>
    <scope>NUCLEOTIDE SEQUENCE [LARGE SCALE GENOMIC DNA]</scope>
    <source>
        <strain>MR-7</strain>
    </source>
</reference>
<accession>Q0HTV0</accession>
<keyword id="KW-0687">Ribonucleoprotein</keyword>
<keyword id="KW-0689">Ribosomal protein</keyword>